<keyword id="KW-1283">Bacterial microcompartment</keyword>
<keyword id="KW-0113">Calvin cycle</keyword>
<keyword id="KW-0120">Carbon dioxide fixation</keyword>
<keyword id="KW-1282">Carboxysome</keyword>
<keyword id="KW-1015">Disulfide bond</keyword>
<keyword id="KW-0456">Lyase</keyword>
<keyword id="KW-0460">Magnesium</keyword>
<keyword id="KW-0479">Metal-binding</keyword>
<keyword id="KW-0503">Monooxygenase</keyword>
<keyword id="KW-0560">Oxidoreductase</keyword>
<keyword id="KW-0601">Photorespiration</keyword>
<keyword id="KW-0602">Photosynthesis</keyword>
<proteinExistence type="inferred from homology"/>
<accession>B8HQS5</accession>
<evidence type="ECO:0000255" key="1">
    <source>
        <dbReference type="HAMAP-Rule" id="MF_01338"/>
    </source>
</evidence>
<name>RBL_CYAP4</name>
<feature type="chain" id="PRO_1000166261" description="Ribulose bisphosphate carboxylase large chain">
    <location>
        <begin position="1"/>
        <end position="476"/>
    </location>
</feature>
<feature type="active site" description="Proton acceptor" evidence="1">
    <location>
        <position position="176"/>
    </location>
</feature>
<feature type="active site" description="Proton acceptor" evidence="1">
    <location>
        <position position="295"/>
    </location>
</feature>
<feature type="binding site" description="in homodimeric partner" evidence="1">
    <location>
        <position position="124"/>
    </location>
    <ligand>
        <name>substrate</name>
    </ligand>
</feature>
<feature type="binding site" evidence="1">
    <location>
        <position position="174"/>
    </location>
    <ligand>
        <name>substrate</name>
    </ligand>
</feature>
<feature type="binding site" evidence="1">
    <location>
        <position position="178"/>
    </location>
    <ligand>
        <name>substrate</name>
    </ligand>
</feature>
<feature type="binding site" description="via carbamate group" evidence="1">
    <location>
        <position position="202"/>
    </location>
    <ligand>
        <name>Mg(2+)</name>
        <dbReference type="ChEBI" id="CHEBI:18420"/>
    </ligand>
</feature>
<feature type="binding site" evidence="1">
    <location>
        <position position="204"/>
    </location>
    <ligand>
        <name>Mg(2+)</name>
        <dbReference type="ChEBI" id="CHEBI:18420"/>
    </ligand>
</feature>
<feature type="binding site" evidence="1">
    <location>
        <position position="205"/>
    </location>
    <ligand>
        <name>Mg(2+)</name>
        <dbReference type="ChEBI" id="CHEBI:18420"/>
    </ligand>
</feature>
<feature type="binding site" evidence="1">
    <location>
        <position position="296"/>
    </location>
    <ligand>
        <name>substrate</name>
    </ligand>
</feature>
<feature type="binding site" evidence="1">
    <location>
        <position position="328"/>
    </location>
    <ligand>
        <name>substrate</name>
    </ligand>
</feature>
<feature type="binding site" evidence="1">
    <location>
        <position position="380"/>
    </location>
    <ligand>
        <name>substrate</name>
    </ligand>
</feature>
<feature type="site" description="Transition state stabilizer" evidence="1">
    <location>
        <position position="335"/>
    </location>
</feature>
<feature type="modified residue" description="N6-carboxylysine" evidence="1">
    <location>
        <position position="202"/>
    </location>
</feature>
<feature type="disulfide bond" description="Interchain; in linked form" evidence="1">
    <location>
        <position position="248"/>
    </location>
</feature>
<dbReference type="EC" id="4.1.1.39" evidence="1"/>
<dbReference type="EMBL" id="CP001344">
    <property type="protein sequence ID" value="ACL45746.1"/>
    <property type="molecule type" value="Genomic_DNA"/>
</dbReference>
<dbReference type="SMR" id="B8HQS5"/>
<dbReference type="STRING" id="395961.Cyan7425_3422"/>
<dbReference type="KEGG" id="cyn:Cyan7425_3422"/>
<dbReference type="eggNOG" id="COG1850">
    <property type="taxonomic scope" value="Bacteria"/>
</dbReference>
<dbReference type="HOGENOM" id="CLU_031450_2_0_3"/>
<dbReference type="OrthoDB" id="9770811at2"/>
<dbReference type="GO" id="GO:0031470">
    <property type="term" value="C:carboxysome"/>
    <property type="evidence" value="ECO:0007669"/>
    <property type="project" value="UniProtKB-SubCell"/>
</dbReference>
<dbReference type="GO" id="GO:0000287">
    <property type="term" value="F:magnesium ion binding"/>
    <property type="evidence" value="ECO:0007669"/>
    <property type="project" value="UniProtKB-UniRule"/>
</dbReference>
<dbReference type="GO" id="GO:0004497">
    <property type="term" value="F:monooxygenase activity"/>
    <property type="evidence" value="ECO:0007669"/>
    <property type="project" value="UniProtKB-KW"/>
</dbReference>
<dbReference type="GO" id="GO:0016984">
    <property type="term" value="F:ribulose-bisphosphate carboxylase activity"/>
    <property type="evidence" value="ECO:0007669"/>
    <property type="project" value="UniProtKB-UniRule"/>
</dbReference>
<dbReference type="GO" id="GO:0009853">
    <property type="term" value="P:photorespiration"/>
    <property type="evidence" value="ECO:0007669"/>
    <property type="project" value="UniProtKB-KW"/>
</dbReference>
<dbReference type="GO" id="GO:0019253">
    <property type="term" value="P:reductive pentose-phosphate cycle"/>
    <property type="evidence" value="ECO:0007669"/>
    <property type="project" value="UniProtKB-UniRule"/>
</dbReference>
<dbReference type="CDD" id="cd08212">
    <property type="entry name" value="RuBisCO_large_I"/>
    <property type="match status" value="1"/>
</dbReference>
<dbReference type="Gene3D" id="3.20.20.110">
    <property type="entry name" value="Ribulose bisphosphate carboxylase, large subunit, C-terminal domain"/>
    <property type="match status" value="1"/>
</dbReference>
<dbReference type="Gene3D" id="3.30.70.150">
    <property type="entry name" value="RuBisCO large subunit, N-terminal domain"/>
    <property type="match status" value="1"/>
</dbReference>
<dbReference type="HAMAP" id="MF_01338">
    <property type="entry name" value="RuBisCO_L_type1"/>
    <property type="match status" value="1"/>
</dbReference>
<dbReference type="InterPro" id="IPR033966">
    <property type="entry name" value="RuBisCO"/>
</dbReference>
<dbReference type="InterPro" id="IPR020878">
    <property type="entry name" value="RuBisCo_large_chain_AS"/>
</dbReference>
<dbReference type="InterPro" id="IPR000685">
    <property type="entry name" value="RuBisCO_lsu_C"/>
</dbReference>
<dbReference type="InterPro" id="IPR036376">
    <property type="entry name" value="RuBisCO_lsu_C_sf"/>
</dbReference>
<dbReference type="InterPro" id="IPR017443">
    <property type="entry name" value="RuBisCO_lsu_fd_N"/>
</dbReference>
<dbReference type="InterPro" id="IPR036422">
    <property type="entry name" value="RuBisCO_lsu_N_sf"/>
</dbReference>
<dbReference type="InterPro" id="IPR020888">
    <property type="entry name" value="RuBisCO_lsuI"/>
</dbReference>
<dbReference type="NCBIfam" id="NF003252">
    <property type="entry name" value="PRK04208.1"/>
    <property type="match status" value="1"/>
</dbReference>
<dbReference type="PANTHER" id="PTHR42704">
    <property type="entry name" value="RIBULOSE BISPHOSPHATE CARBOXYLASE"/>
    <property type="match status" value="1"/>
</dbReference>
<dbReference type="PANTHER" id="PTHR42704:SF17">
    <property type="entry name" value="RIBULOSE BISPHOSPHATE CARBOXYLASE LARGE CHAIN"/>
    <property type="match status" value="1"/>
</dbReference>
<dbReference type="Pfam" id="PF00016">
    <property type="entry name" value="RuBisCO_large"/>
    <property type="match status" value="1"/>
</dbReference>
<dbReference type="Pfam" id="PF02788">
    <property type="entry name" value="RuBisCO_large_N"/>
    <property type="match status" value="1"/>
</dbReference>
<dbReference type="SFLD" id="SFLDG01052">
    <property type="entry name" value="RuBisCO"/>
    <property type="match status" value="1"/>
</dbReference>
<dbReference type="SFLD" id="SFLDS00014">
    <property type="entry name" value="RuBisCO"/>
    <property type="match status" value="1"/>
</dbReference>
<dbReference type="SFLD" id="SFLDG00301">
    <property type="entry name" value="RuBisCO-like_proteins"/>
    <property type="match status" value="1"/>
</dbReference>
<dbReference type="SUPFAM" id="SSF51649">
    <property type="entry name" value="RuBisCo, C-terminal domain"/>
    <property type="match status" value="1"/>
</dbReference>
<dbReference type="SUPFAM" id="SSF54966">
    <property type="entry name" value="RuBisCO, large subunit, small (N-terminal) domain"/>
    <property type="match status" value="1"/>
</dbReference>
<dbReference type="PROSITE" id="PS00157">
    <property type="entry name" value="RUBISCO_LARGE"/>
    <property type="match status" value="1"/>
</dbReference>
<reference key="1">
    <citation type="journal article" date="2011" name="MBio">
        <title>Novel metabolic attributes of the genus Cyanothece, comprising a group of unicellular nitrogen-fixing Cyanobacteria.</title>
        <authorList>
            <person name="Bandyopadhyay A."/>
            <person name="Elvitigala T."/>
            <person name="Welsh E."/>
            <person name="Stockel J."/>
            <person name="Liberton M."/>
            <person name="Min H."/>
            <person name="Sherman L.A."/>
            <person name="Pakrasi H.B."/>
        </authorList>
    </citation>
    <scope>NUCLEOTIDE SEQUENCE [LARGE SCALE GENOMIC DNA]</scope>
    <source>
        <strain>PCC 7425 / ATCC 29141</strain>
    </source>
</reference>
<sequence length="476" mass="53051">MSYAQTRTQTKAGYKAGVQDYRLTYYTPDYTPKDTDILAAFRVTPQPGVPYEEAAAAVAAESSTGTWTTVWTDLLTDLDRYKGRCYDIEPVPGEDNQFIAYIAYPLDLFEEGSVTNLLTSLVGNVFGFKALKALRLEDLRIPVAYLKTFQGPPHGIQVERDKINKYGRPLLGCTIKPKLGLSAKNYGRAVYECLRGGLDFTKDDENINSQPFQRWRDRFLFVADAIHKAQAETGEVKGHYLNVTAGTCEEMMKRAAFAKELEMPIIMHDFLTGGFTANTSLAHYCRDNGLLLHIHRAMHAVIDRQKNHGIHFRVLSKCLRMSGGDHIHTGTVVGKLEGDKDITLGFIDLLRENYIEENRSRGIYFTQDWASMPGVMAVASGGIHVWHMPALVDIFGDDAVLQFGGGTLGHPWGNAPGATANRVALEACVQARNEGRNLMREGGDIIREACRWSPELAAACELWKEIKFEFEAVDTV</sequence>
<protein>
    <recommendedName>
        <fullName evidence="1">Ribulose bisphosphate carboxylase large chain</fullName>
        <shortName evidence="1">RuBisCO large subunit</shortName>
        <ecNumber evidence="1">4.1.1.39</ecNumber>
    </recommendedName>
</protein>
<gene>
    <name evidence="1" type="primary">cbbL</name>
    <name evidence="1" type="synonym">rbcL</name>
    <name type="ordered locus">Cyan7425_3422</name>
</gene>
<comment type="function">
    <text evidence="1">RuBisCO catalyzes two reactions: the carboxylation of D-ribulose 1,5-bisphosphate, the primary event in carbon dioxide fixation, as well as the oxidative fragmentation of the pentose substrate in the photorespiration process. Both reactions occur simultaneously and in competition at the same active site.</text>
</comment>
<comment type="catalytic activity">
    <reaction evidence="1">
        <text>2 (2R)-3-phosphoglycerate + 2 H(+) = D-ribulose 1,5-bisphosphate + CO2 + H2O</text>
        <dbReference type="Rhea" id="RHEA:23124"/>
        <dbReference type="ChEBI" id="CHEBI:15377"/>
        <dbReference type="ChEBI" id="CHEBI:15378"/>
        <dbReference type="ChEBI" id="CHEBI:16526"/>
        <dbReference type="ChEBI" id="CHEBI:57870"/>
        <dbReference type="ChEBI" id="CHEBI:58272"/>
        <dbReference type="EC" id="4.1.1.39"/>
    </reaction>
</comment>
<comment type="catalytic activity">
    <reaction evidence="1">
        <text>D-ribulose 1,5-bisphosphate + O2 = 2-phosphoglycolate + (2R)-3-phosphoglycerate + 2 H(+)</text>
        <dbReference type="Rhea" id="RHEA:36631"/>
        <dbReference type="ChEBI" id="CHEBI:15378"/>
        <dbReference type="ChEBI" id="CHEBI:15379"/>
        <dbReference type="ChEBI" id="CHEBI:57870"/>
        <dbReference type="ChEBI" id="CHEBI:58033"/>
        <dbReference type="ChEBI" id="CHEBI:58272"/>
    </reaction>
</comment>
<comment type="cofactor">
    <cofactor evidence="1">
        <name>Mg(2+)</name>
        <dbReference type="ChEBI" id="CHEBI:18420"/>
    </cofactor>
    <text evidence="1">Binds 1 Mg(2+) ion per subunit.</text>
</comment>
<comment type="subunit">
    <text evidence="1">Heterohexadecamer of 8 large chains and 8 small chains; disulfide-linked. The disulfide link is formed within the large subunit homodimers.</text>
</comment>
<comment type="subcellular location">
    <subcellularLocation>
        <location evidence="1">Carboxysome</location>
    </subcellularLocation>
</comment>
<comment type="PTM">
    <text evidence="1">The disulfide bond which can form in the large chain dimeric partners within the hexadecamer appears to be associated with oxidative stress and protein turnover.</text>
</comment>
<comment type="miscellaneous">
    <text evidence="1">The basic functional RuBisCO is composed of a large chain homodimer in a 'head-to-tail' conformation. In form I RuBisCO this homodimer is arranged in a barrel-like tetramer with the small subunits forming a tetrameric 'cap' on each end of the 'barrel'.</text>
</comment>
<comment type="similarity">
    <text evidence="1">Belongs to the RuBisCO large chain family. Type I subfamily.</text>
</comment>
<organism>
    <name type="scientific">Cyanothece sp. (strain PCC 7425 / ATCC 29141)</name>
    <dbReference type="NCBI Taxonomy" id="395961"/>
    <lineage>
        <taxon>Bacteria</taxon>
        <taxon>Bacillati</taxon>
        <taxon>Cyanobacteriota</taxon>
        <taxon>Cyanophyceae</taxon>
        <taxon>Gomontiellales</taxon>
        <taxon>Cyanothecaceae</taxon>
        <taxon>Cyanothece</taxon>
    </lineage>
</organism>